<accession>B1Y8E7</accession>
<feature type="chain" id="PRO_1000088775" description="Aspartate carbamoyltransferase catalytic subunit">
    <location>
        <begin position="1"/>
        <end position="320"/>
    </location>
</feature>
<feature type="binding site" evidence="1">
    <location>
        <position position="68"/>
    </location>
    <ligand>
        <name>carbamoyl phosphate</name>
        <dbReference type="ChEBI" id="CHEBI:58228"/>
    </ligand>
</feature>
<feature type="binding site" evidence="1">
    <location>
        <position position="69"/>
    </location>
    <ligand>
        <name>carbamoyl phosphate</name>
        <dbReference type="ChEBI" id="CHEBI:58228"/>
    </ligand>
</feature>
<feature type="binding site" evidence="1">
    <location>
        <position position="96"/>
    </location>
    <ligand>
        <name>L-aspartate</name>
        <dbReference type="ChEBI" id="CHEBI:29991"/>
    </ligand>
</feature>
<feature type="binding site" evidence="1">
    <location>
        <position position="118"/>
    </location>
    <ligand>
        <name>carbamoyl phosphate</name>
        <dbReference type="ChEBI" id="CHEBI:58228"/>
    </ligand>
</feature>
<feature type="binding site" evidence="1">
    <location>
        <position position="148"/>
    </location>
    <ligand>
        <name>carbamoyl phosphate</name>
        <dbReference type="ChEBI" id="CHEBI:58228"/>
    </ligand>
</feature>
<feature type="binding site" evidence="1">
    <location>
        <position position="151"/>
    </location>
    <ligand>
        <name>carbamoyl phosphate</name>
        <dbReference type="ChEBI" id="CHEBI:58228"/>
    </ligand>
</feature>
<feature type="binding site" evidence="1">
    <location>
        <position position="181"/>
    </location>
    <ligand>
        <name>L-aspartate</name>
        <dbReference type="ChEBI" id="CHEBI:29991"/>
    </ligand>
</feature>
<feature type="binding site" evidence="1">
    <location>
        <position position="236"/>
    </location>
    <ligand>
        <name>L-aspartate</name>
        <dbReference type="ChEBI" id="CHEBI:29991"/>
    </ligand>
</feature>
<feature type="binding site" evidence="1">
    <location>
        <position position="277"/>
    </location>
    <ligand>
        <name>carbamoyl phosphate</name>
        <dbReference type="ChEBI" id="CHEBI:58228"/>
    </ligand>
</feature>
<feature type="binding site" evidence="1">
    <location>
        <position position="278"/>
    </location>
    <ligand>
        <name>carbamoyl phosphate</name>
        <dbReference type="ChEBI" id="CHEBI:58228"/>
    </ligand>
</feature>
<organism>
    <name type="scientific">Leptothrix cholodnii (strain ATCC 51168 / LMG 8142 / SP-6)</name>
    <name type="common">Leptothrix discophora (strain SP-6)</name>
    <dbReference type="NCBI Taxonomy" id="395495"/>
    <lineage>
        <taxon>Bacteria</taxon>
        <taxon>Pseudomonadati</taxon>
        <taxon>Pseudomonadota</taxon>
        <taxon>Betaproteobacteria</taxon>
        <taxon>Burkholderiales</taxon>
        <taxon>Sphaerotilaceae</taxon>
        <taxon>Leptothrix</taxon>
    </lineage>
</organism>
<reference key="1">
    <citation type="submission" date="2008-03" db="EMBL/GenBank/DDBJ databases">
        <title>Complete sequence of Leptothrix cholodnii SP-6.</title>
        <authorList>
            <consortium name="US DOE Joint Genome Institute"/>
            <person name="Copeland A."/>
            <person name="Lucas S."/>
            <person name="Lapidus A."/>
            <person name="Glavina del Rio T."/>
            <person name="Dalin E."/>
            <person name="Tice H."/>
            <person name="Bruce D."/>
            <person name="Goodwin L."/>
            <person name="Pitluck S."/>
            <person name="Chertkov O."/>
            <person name="Brettin T."/>
            <person name="Detter J.C."/>
            <person name="Han C."/>
            <person name="Kuske C.R."/>
            <person name="Schmutz J."/>
            <person name="Larimer F."/>
            <person name="Land M."/>
            <person name="Hauser L."/>
            <person name="Kyrpides N."/>
            <person name="Lykidis A."/>
            <person name="Emerson D."/>
            <person name="Richardson P."/>
        </authorList>
    </citation>
    <scope>NUCLEOTIDE SEQUENCE [LARGE SCALE GENOMIC DNA]</scope>
    <source>
        <strain>ATCC 51168 / LMG 8142 / SP-6</strain>
    </source>
</reference>
<name>PYRB_LEPCP</name>
<sequence length="320" mass="34632">MLSRRNPQLNNHGELIHLLSTEGLPRAVLTQILDTASTFLSVNDRDVKKVPLLRGKSVFNLFFENSTRTRTTFEIAAKRLSADVINLDIAKSSAAKGESLLDTIANLSAMHADMFVVRHSESGAPYLIAEHCAPHVHVVNAGDGRHAHPTQGLLDMYTIRHYKKDFTGLRVAIVGDIVHSRVARSDIHALTTLGVPDIRAVGPKTLVPGDLRDMGVRVCHDMAEGIKDADVIIMLRLQNERMSGAMLPSAGEYFKSYGLTADKLALAAPDCIVMHPGPINRGVEIESTVADGAHSVILPQVTFGIAVRMAVMSIIAGNDA</sequence>
<proteinExistence type="inferred from homology"/>
<comment type="function">
    <text evidence="1">Catalyzes the condensation of carbamoyl phosphate and aspartate to form carbamoyl aspartate and inorganic phosphate, the committed step in the de novo pyrimidine nucleotide biosynthesis pathway.</text>
</comment>
<comment type="catalytic activity">
    <reaction evidence="1">
        <text>carbamoyl phosphate + L-aspartate = N-carbamoyl-L-aspartate + phosphate + H(+)</text>
        <dbReference type="Rhea" id="RHEA:20013"/>
        <dbReference type="ChEBI" id="CHEBI:15378"/>
        <dbReference type="ChEBI" id="CHEBI:29991"/>
        <dbReference type="ChEBI" id="CHEBI:32814"/>
        <dbReference type="ChEBI" id="CHEBI:43474"/>
        <dbReference type="ChEBI" id="CHEBI:58228"/>
        <dbReference type="EC" id="2.1.3.2"/>
    </reaction>
</comment>
<comment type="pathway">
    <text evidence="1">Pyrimidine metabolism; UMP biosynthesis via de novo pathway; (S)-dihydroorotate from bicarbonate: step 2/3.</text>
</comment>
<comment type="subunit">
    <text evidence="1">Heterododecamer (2C3:3R2) of six catalytic PyrB chains organized as two trimers (C3), and six regulatory PyrI chains organized as three dimers (R2).</text>
</comment>
<comment type="similarity">
    <text evidence="1">Belongs to the aspartate/ornithine carbamoyltransferase superfamily. ATCase family.</text>
</comment>
<gene>
    <name evidence="1" type="primary">pyrB</name>
    <name type="ordered locus">Lcho_3959</name>
</gene>
<dbReference type="EC" id="2.1.3.2" evidence="1"/>
<dbReference type="EMBL" id="CP001013">
    <property type="protein sequence ID" value="ACB36213.1"/>
    <property type="molecule type" value="Genomic_DNA"/>
</dbReference>
<dbReference type="RefSeq" id="WP_012348958.1">
    <property type="nucleotide sequence ID" value="NC_010524.1"/>
</dbReference>
<dbReference type="SMR" id="B1Y8E7"/>
<dbReference type="STRING" id="395495.Lcho_3959"/>
<dbReference type="KEGG" id="lch:Lcho_3959"/>
<dbReference type="eggNOG" id="COG0540">
    <property type="taxonomic scope" value="Bacteria"/>
</dbReference>
<dbReference type="HOGENOM" id="CLU_043846_2_0_4"/>
<dbReference type="OrthoDB" id="9774690at2"/>
<dbReference type="UniPathway" id="UPA00070">
    <property type="reaction ID" value="UER00116"/>
</dbReference>
<dbReference type="Proteomes" id="UP000001693">
    <property type="component" value="Chromosome"/>
</dbReference>
<dbReference type="GO" id="GO:0005829">
    <property type="term" value="C:cytosol"/>
    <property type="evidence" value="ECO:0007669"/>
    <property type="project" value="TreeGrafter"/>
</dbReference>
<dbReference type="GO" id="GO:0016597">
    <property type="term" value="F:amino acid binding"/>
    <property type="evidence" value="ECO:0007669"/>
    <property type="project" value="InterPro"/>
</dbReference>
<dbReference type="GO" id="GO:0004070">
    <property type="term" value="F:aspartate carbamoyltransferase activity"/>
    <property type="evidence" value="ECO:0007669"/>
    <property type="project" value="UniProtKB-UniRule"/>
</dbReference>
<dbReference type="GO" id="GO:0006207">
    <property type="term" value="P:'de novo' pyrimidine nucleobase biosynthetic process"/>
    <property type="evidence" value="ECO:0007669"/>
    <property type="project" value="InterPro"/>
</dbReference>
<dbReference type="GO" id="GO:0044205">
    <property type="term" value="P:'de novo' UMP biosynthetic process"/>
    <property type="evidence" value="ECO:0007669"/>
    <property type="project" value="UniProtKB-UniRule"/>
</dbReference>
<dbReference type="GO" id="GO:0006520">
    <property type="term" value="P:amino acid metabolic process"/>
    <property type="evidence" value="ECO:0007669"/>
    <property type="project" value="InterPro"/>
</dbReference>
<dbReference type="FunFam" id="3.40.50.1370:FF:000007">
    <property type="entry name" value="Aspartate carbamoyltransferase"/>
    <property type="match status" value="1"/>
</dbReference>
<dbReference type="Gene3D" id="3.40.50.1370">
    <property type="entry name" value="Aspartate/ornithine carbamoyltransferase"/>
    <property type="match status" value="2"/>
</dbReference>
<dbReference type="HAMAP" id="MF_00001">
    <property type="entry name" value="Asp_carb_tr"/>
    <property type="match status" value="1"/>
</dbReference>
<dbReference type="InterPro" id="IPR006132">
    <property type="entry name" value="Asp/Orn_carbamoyltranf_P-bd"/>
</dbReference>
<dbReference type="InterPro" id="IPR006130">
    <property type="entry name" value="Asp/Orn_carbamoylTrfase"/>
</dbReference>
<dbReference type="InterPro" id="IPR036901">
    <property type="entry name" value="Asp/Orn_carbamoylTrfase_sf"/>
</dbReference>
<dbReference type="InterPro" id="IPR002082">
    <property type="entry name" value="Asp_carbamoyltransf"/>
</dbReference>
<dbReference type="InterPro" id="IPR006131">
    <property type="entry name" value="Asp_carbamoyltransf_Asp/Orn-bd"/>
</dbReference>
<dbReference type="NCBIfam" id="TIGR00670">
    <property type="entry name" value="asp_carb_tr"/>
    <property type="match status" value="1"/>
</dbReference>
<dbReference type="NCBIfam" id="NF002032">
    <property type="entry name" value="PRK00856.1"/>
    <property type="match status" value="1"/>
</dbReference>
<dbReference type="PANTHER" id="PTHR45753:SF6">
    <property type="entry name" value="ASPARTATE CARBAMOYLTRANSFERASE"/>
    <property type="match status" value="1"/>
</dbReference>
<dbReference type="PANTHER" id="PTHR45753">
    <property type="entry name" value="ORNITHINE CARBAMOYLTRANSFERASE, MITOCHONDRIAL"/>
    <property type="match status" value="1"/>
</dbReference>
<dbReference type="Pfam" id="PF00185">
    <property type="entry name" value="OTCace"/>
    <property type="match status" value="1"/>
</dbReference>
<dbReference type="Pfam" id="PF02729">
    <property type="entry name" value="OTCace_N"/>
    <property type="match status" value="1"/>
</dbReference>
<dbReference type="PRINTS" id="PR00100">
    <property type="entry name" value="AOTCASE"/>
</dbReference>
<dbReference type="PRINTS" id="PR00101">
    <property type="entry name" value="ATCASE"/>
</dbReference>
<dbReference type="SUPFAM" id="SSF53671">
    <property type="entry name" value="Aspartate/ornithine carbamoyltransferase"/>
    <property type="match status" value="1"/>
</dbReference>
<dbReference type="PROSITE" id="PS00097">
    <property type="entry name" value="CARBAMOYLTRANSFERASE"/>
    <property type="match status" value="1"/>
</dbReference>
<evidence type="ECO:0000255" key="1">
    <source>
        <dbReference type="HAMAP-Rule" id="MF_00001"/>
    </source>
</evidence>
<protein>
    <recommendedName>
        <fullName evidence="1">Aspartate carbamoyltransferase catalytic subunit</fullName>
        <ecNumber evidence="1">2.1.3.2</ecNumber>
    </recommendedName>
    <alternativeName>
        <fullName evidence="1">Aspartate transcarbamylase</fullName>
        <shortName evidence="1">ATCase</shortName>
    </alternativeName>
</protein>
<keyword id="KW-0665">Pyrimidine biosynthesis</keyword>
<keyword id="KW-1185">Reference proteome</keyword>
<keyword id="KW-0808">Transferase</keyword>